<sequence length="319" mass="34855">MSTQTRVRHFLADDDLTPAQQREVLELASELKQHPYSRKTYDGPQSVAVLFDKTSTRTRFSFDAGISQLGGHAIVVDSGKSQMGKGETFQDTGAVLSRFVSTIVWRTGSHQNLLDMAETATVPIVNALSDDLHPCQILADLQTCIEHLCPQEGVPGLKGLKAVYLGDGDNNMANSYMIGFATAGLDITIIAPKKFQPKQEFVDRAEKRASETGAIVSVTADISAVSDADVVITDTWVSMGMENDGIDRRTPFLPYQVNDEVMALAKKSAIFLHCLPAYRGSEVAASVIDGPQSVVFDEAENRLHAQKALLVWLMENQPR</sequence>
<reference key="1">
    <citation type="journal article" date="2003" name="Nucleic Acids Res.">
        <title>The complete genome sequence and analysis of Corynebacterium diphtheriae NCTC13129.</title>
        <authorList>
            <person name="Cerdeno-Tarraga A.-M."/>
            <person name="Efstratiou A."/>
            <person name="Dover L.G."/>
            <person name="Holden M.T.G."/>
            <person name="Pallen M.J."/>
            <person name="Bentley S.D."/>
            <person name="Besra G.S."/>
            <person name="Churcher C.M."/>
            <person name="James K.D."/>
            <person name="De Zoysa A."/>
            <person name="Chillingworth T."/>
            <person name="Cronin A."/>
            <person name="Dowd L."/>
            <person name="Feltwell T."/>
            <person name="Hamlin N."/>
            <person name="Holroyd S."/>
            <person name="Jagels K."/>
            <person name="Moule S."/>
            <person name="Quail M.A."/>
            <person name="Rabbinowitsch E."/>
            <person name="Rutherford K.M."/>
            <person name="Thomson N.R."/>
            <person name="Unwin L."/>
            <person name="Whitehead S."/>
            <person name="Barrell B.G."/>
            <person name="Parkhill J."/>
        </authorList>
    </citation>
    <scope>NUCLEOTIDE SEQUENCE [LARGE SCALE GENOMIC DNA]</scope>
    <source>
        <strain>ATCC 700971 / NCTC 13129 / Biotype gravis</strain>
    </source>
</reference>
<feature type="chain" id="PRO_0000112912" description="Ornithine carbamoyltransferase">
    <location>
        <begin position="1"/>
        <end position="319"/>
    </location>
</feature>
<feature type="binding site" evidence="2">
    <location>
        <begin position="55"/>
        <end position="58"/>
    </location>
    <ligand>
        <name>carbamoyl phosphate</name>
        <dbReference type="ChEBI" id="CHEBI:58228"/>
    </ligand>
</feature>
<feature type="binding site" evidence="2">
    <location>
        <position position="82"/>
    </location>
    <ligand>
        <name>carbamoyl phosphate</name>
        <dbReference type="ChEBI" id="CHEBI:58228"/>
    </ligand>
</feature>
<feature type="binding site" evidence="2">
    <location>
        <position position="106"/>
    </location>
    <ligand>
        <name>carbamoyl phosphate</name>
        <dbReference type="ChEBI" id="CHEBI:58228"/>
    </ligand>
</feature>
<feature type="binding site" evidence="2">
    <location>
        <begin position="133"/>
        <end position="136"/>
    </location>
    <ligand>
        <name>carbamoyl phosphate</name>
        <dbReference type="ChEBI" id="CHEBI:58228"/>
    </ligand>
</feature>
<feature type="binding site" evidence="2">
    <location>
        <position position="171"/>
    </location>
    <ligand>
        <name>L-ornithine</name>
        <dbReference type="ChEBI" id="CHEBI:46911"/>
    </ligand>
</feature>
<feature type="binding site" evidence="2">
    <location>
        <position position="234"/>
    </location>
    <ligand>
        <name>L-ornithine</name>
        <dbReference type="ChEBI" id="CHEBI:46911"/>
    </ligand>
</feature>
<feature type="binding site" evidence="2">
    <location>
        <begin position="238"/>
        <end position="239"/>
    </location>
    <ligand>
        <name>L-ornithine</name>
        <dbReference type="ChEBI" id="CHEBI:46911"/>
    </ligand>
</feature>
<feature type="binding site" evidence="2">
    <location>
        <begin position="274"/>
        <end position="275"/>
    </location>
    <ligand>
        <name>carbamoyl phosphate</name>
        <dbReference type="ChEBI" id="CHEBI:58228"/>
    </ligand>
</feature>
<feature type="binding site" evidence="2">
    <location>
        <position position="302"/>
    </location>
    <ligand>
        <name>carbamoyl phosphate</name>
        <dbReference type="ChEBI" id="CHEBI:58228"/>
    </ligand>
</feature>
<protein>
    <recommendedName>
        <fullName evidence="2">Ornithine carbamoyltransferase</fullName>
        <shortName evidence="2">OTCase</shortName>
        <ecNumber evidence="2">2.1.3.3</ecNumber>
    </recommendedName>
</protein>
<evidence type="ECO:0000250" key="1"/>
<evidence type="ECO:0000255" key="2">
    <source>
        <dbReference type="HAMAP-Rule" id="MF_01109"/>
    </source>
</evidence>
<dbReference type="EC" id="2.1.3.3" evidence="2"/>
<dbReference type="EMBL" id="BX248357">
    <property type="protein sequence ID" value="CAE49691.1"/>
    <property type="molecule type" value="Genomic_DNA"/>
</dbReference>
<dbReference type="RefSeq" id="WP_010934859.1">
    <property type="nucleotide sequence ID" value="NC_002935.2"/>
</dbReference>
<dbReference type="SMR" id="Q6NHG6"/>
<dbReference type="STRING" id="257309.DIP1171"/>
<dbReference type="GeneID" id="29423284"/>
<dbReference type="KEGG" id="cdi:DIP1171"/>
<dbReference type="HOGENOM" id="CLU_043846_3_2_11"/>
<dbReference type="UniPathway" id="UPA00068">
    <property type="reaction ID" value="UER00112"/>
</dbReference>
<dbReference type="Proteomes" id="UP000002198">
    <property type="component" value="Chromosome"/>
</dbReference>
<dbReference type="GO" id="GO:0005737">
    <property type="term" value="C:cytoplasm"/>
    <property type="evidence" value="ECO:0007669"/>
    <property type="project" value="UniProtKB-SubCell"/>
</dbReference>
<dbReference type="GO" id="GO:0016597">
    <property type="term" value="F:amino acid binding"/>
    <property type="evidence" value="ECO:0007669"/>
    <property type="project" value="InterPro"/>
</dbReference>
<dbReference type="GO" id="GO:0004585">
    <property type="term" value="F:ornithine carbamoyltransferase activity"/>
    <property type="evidence" value="ECO:0007669"/>
    <property type="project" value="UniProtKB-UniRule"/>
</dbReference>
<dbReference type="GO" id="GO:0042450">
    <property type="term" value="P:arginine biosynthetic process via ornithine"/>
    <property type="evidence" value="ECO:0007669"/>
    <property type="project" value="TreeGrafter"/>
</dbReference>
<dbReference type="GO" id="GO:0019240">
    <property type="term" value="P:citrulline biosynthetic process"/>
    <property type="evidence" value="ECO:0007669"/>
    <property type="project" value="TreeGrafter"/>
</dbReference>
<dbReference type="GO" id="GO:0006526">
    <property type="term" value="P:L-arginine biosynthetic process"/>
    <property type="evidence" value="ECO:0007669"/>
    <property type="project" value="UniProtKB-UniRule"/>
</dbReference>
<dbReference type="FunFam" id="3.40.50.1370:FF:000008">
    <property type="entry name" value="Ornithine carbamoyltransferase"/>
    <property type="match status" value="1"/>
</dbReference>
<dbReference type="Gene3D" id="3.40.50.1370">
    <property type="entry name" value="Aspartate/ornithine carbamoyltransferase"/>
    <property type="match status" value="2"/>
</dbReference>
<dbReference type="HAMAP" id="MF_01109">
    <property type="entry name" value="OTCase"/>
    <property type="match status" value="1"/>
</dbReference>
<dbReference type="InterPro" id="IPR006132">
    <property type="entry name" value="Asp/Orn_carbamoyltranf_P-bd"/>
</dbReference>
<dbReference type="InterPro" id="IPR006130">
    <property type="entry name" value="Asp/Orn_carbamoylTrfase"/>
</dbReference>
<dbReference type="InterPro" id="IPR036901">
    <property type="entry name" value="Asp/Orn_carbamoylTrfase_sf"/>
</dbReference>
<dbReference type="InterPro" id="IPR006131">
    <property type="entry name" value="Asp_carbamoyltransf_Asp/Orn-bd"/>
</dbReference>
<dbReference type="InterPro" id="IPR002292">
    <property type="entry name" value="Orn/put_carbamltrans"/>
</dbReference>
<dbReference type="InterPro" id="IPR024904">
    <property type="entry name" value="OTCase_ArgI"/>
</dbReference>
<dbReference type="NCBIfam" id="TIGR00658">
    <property type="entry name" value="orni_carb_tr"/>
    <property type="match status" value="1"/>
</dbReference>
<dbReference type="NCBIfam" id="NF001986">
    <property type="entry name" value="PRK00779.1"/>
    <property type="match status" value="1"/>
</dbReference>
<dbReference type="PANTHER" id="PTHR45753">
    <property type="entry name" value="ORNITHINE CARBAMOYLTRANSFERASE, MITOCHONDRIAL"/>
    <property type="match status" value="1"/>
</dbReference>
<dbReference type="PANTHER" id="PTHR45753:SF3">
    <property type="entry name" value="ORNITHINE TRANSCARBAMYLASE, MITOCHONDRIAL"/>
    <property type="match status" value="1"/>
</dbReference>
<dbReference type="Pfam" id="PF00185">
    <property type="entry name" value="OTCace"/>
    <property type="match status" value="1"/>
</dbReference>
<dbReference type="Pfam" id="PF02729">
    <property type="entry name" value="OTCace_N"/>
    <property type="match status" value="1"/>
</dbReference>
<dbReference type="PRINTS" id="PR00100">
    <property type="entry name" value="AOTCASE"/>
</dbReference>
<dbReference type="PRINTS" id="PR00102">
    <property type="entry name" value="OTCASE"/>
</dbReference>
<dbReference type="SUPFAM" id="SSF53671">
    <property type="entry name" value="Aspartate/ornithine carbamoyltransferase"/>
    <property type="match status" value="1"/>
</dbReference>
<dbReference type="PROSITE" id="PS00097">
    <property type="entry name" value="CARBAMOYLTRANSFERASE"/>
    <property type="match status" value="1"/>
</dbReference>
<name>OTC_CORDI</name>
<gene>
    <name evidence="2" type="primary">argF</name>
    <name type="ordered locus">DIP1171</name>
</gene>
<comment type="function">
    <text evidence="1">Reversibly catalyzes the transfer of the carbamoyl group from carbamoyl phosphate (CP) to the N(epsilon) atom of ornithine (ORN) to produce L-citrulline.</text>
</comment>
<comment type="catalytic activity">
    <reaction evidence="2">
        <text>carbamoyl phosphate + L-ornithine = L-citrulline + phosphate + H(+)</text>
        <dbReference type="Rhea" id="RHEA:19513"/>
        <dbReference type="ChEBI" id="CHEBI:15378"/>
        <dbReference type="ChEBI" id="CHEBI:43474"/>
        <dbReference type="ChEBI" id="CHEBI:46911"/>
        <dbReference type="ChEBI" id="CHEBI:57743"/>
        <dbReference type="ChEBI" id="CHEBI:58228"/>
        <dbReference type="EC" id="2.1.3.3"/>
    </reaction>
</comment>
<comment type="pathway">
    <text evidence="2">Amino-acid biosynthesis; L-arginine biosynthesis; L-arginine from L-ornithine and carbamoyl phosphate: step 1/3.</text>
</comment>
<comment type="subcellular location">
    <subcellularLocation>
        <location evidence="2">Cytoplasm</location>
    </subcellularLocation>
</comment>
<comment type="similarity">
    <text evidence="2">Belongs to the aspartate/ornithine carbamoyltransferase superfamily. OTCase family.</text>
</comment>
<organism>
    <name type="scientific">Corynebacterium diphtheriae (strain ATCC 700971 / NCTC 13129 / Biotype gravis)</name>
    <dbReference type="NCBI Taxonomy" id="257309"/>
    <lineage>
        <taxon>Bacteria</taxon>
        <taxon>Bacillati</taxon>
        <taxon>Actinomycetota</taxon>
        <taxon>Actinomycetes</taxon>
        <taxon>Mycobacteriales</taxon>
        <taxon>Corynebacteriaceae</taxon>
        <taxon>Corynebacterium</taxon>
    </lineage>
</organism>
<accession>Q6NHG6</accession>
<keyword id="KW-0028">Amino-acid biosynthesis</keyword>
<keyword id="KW-0055">Arginine biosynthesis</keyword>
<keyword id="KW-0963">Cytoplasm</keyword>
<keyword id="KW-1185">Reference proteome</keyword>
<keyword id="KW-0808">Transferase</keyword>
<proteinExistence type="inferred from homology"/>